<proteinExistence type="inferred from homology"/>
<name>ATPI_CHLVU</name>
<geneLocation type="chloroplast"/>
<gene>
    <name evidence="1" type="primary">atpI</name>
</gene>
<protein>
    <recommendedName>
        <fullName evidence="1">ATP synthase subunit a, chloroplastic</fullName>
    </recommendedName>
    <alternativeName>
        <fullName evidence="1">ATP synthase F0 sector subunit a</fullName>
    </alternativeName>
    <alternativeName>
        <fullName evidence="1">F-ATPase subunit IV</fullName>
    </alternativeName>
</protein>
<feature type="chain" id="PRO_0000002581" description="ATP synthase subunit a, chloroplastic">
    <location>
        <begin position="1"/>
        <end position="247"/>
    </location>
</feature>
<feature type="transmembrane region" description="Helical" evidence="1">
    <location>
        <begin position="28"/>
        <end position="48"/>
    </location>
</feature>
<feature type="transmembrane region" description="Helical" evidence="1">
    <location>
        <begin position="95"/>
        <end position="115"/>
    </location>
</feature>
<feature type="transmembrane region" description="Helical" evidence="1">
    <location>
        <begin position="134"/>
        <end position="154"/>
    </location>
</feature>
<feature type="transmembrane region" description="Helical" evidence="1">
    <location>
        <begin position="199"/>
        <end position="219"/>
    </location>
</feature>
<feature type="transmembrane region" description="Helical" evidence="1">
    <location>
        <begin position="220"/>
        <end position="240"/>
    </location>
</feature>
<comment type="function">
    <text evidence="1">Key component of the proton channel; it plays a direct role in the translocation of protons across the membrane.</text>
</comment>
<comment type="subunit">
    <text evidence="1">F-type ATPases have 2 components, CF(1) - the catalytic core - and CF(0) - the membrane proton channel. CF(1) has five subunits: alpha(3), beta(3), gamma(1), delta(1), epsilon(1). CF(0) has four main subunits: a, b, b' and c.</text>
</comment>
<comment type="subcellular location">
    <subcellularLocation>
        <location evidence="1">Plastid</location>
        <location evidence="1">Chloroplast thylakoid membrane</location>
        <topology evidence="1">Multi-pass membrane protein</topology>
    </subcellularLocation>
</comment>
<comment type="similarity">
    <text evidence="1">Belongs to the ATPase A chain family.</text>
</comment>
<accession>P56295</accession>
<sequence>MTNIWFDVAEVSVGQHWYWQLGGYSLHGQVLITSWIVVAVIGVICLLGTQNLQPVSGGSAATAPKGLQNLTEYITEFIRDLAKTQIGEEDYLKWVPFLGTIFLFIFVSNWSGALIPWRILELPNGELAAPTNDINTTVALALLTSIAYFYAGISKKGLGYFKRYISPAAFLLPINILEDLTKPLSLSFRLFGNILADELVVGVLVSLVPLVVPIPIMLLGLFTSAIQALVFATLAGAYIGESVEDHH</sequence>
<reference key="1">
    <citation type="journal article" date="1997" name="Proc. Natl. Acad. Sci. U.S.A.">
        <title>Complete nucleotide sequence of the chloroplast genome from the green alga Chlorella vulgaris: the existence of genes possibly involved in chloroplast division.</title>
        <authorList>
            <person name="Wakasugi T."/>
            <person name="Nagai T."/>
            <person name="Kapoor M."/>
            <person name="Sugita M."/>
            <person name="Ito M."/>
            <person name="Ito S."/>
            <person name="Tsudzuki J."/>
            <person name="Nakashima K."/>
            <person name="Tsudzuki T."/>
            <person name="Suzuki Y."/>
            <person name="Hamada A."/>
            <person name="Ohta T."/>
            <person name="Inamura A."/>
            <person name="Yoshinaga K."/>
            <person name="Sugiura M."/>
        </authorList>
    </citation>
    <scope>NUCLEOTIDE SEQUENCE [LARGE SCALE GENOMIC DNA]</scope>
    <source>
        <strain>IAM C-27 / Tamiya</strain>
    </source>
</reference>
<keyword id="KW-0066">ATP synthesis</keyword>
<keyword id="KW-0138">CF(0)</keyword>
<keyword id="KW-0150">Chloroplast</keyword>
<keyword id="KW-0375">Hydrogen ion transport</keyword>
<keyword id="KW-0406">Ion transport</keyword>
<keyword id="KW-0472">Membrane</keyword>
<keyword id="KW-0934">Plastid</keyword>
<keyword id="KW-0793">Thylakoid</keyword>
<keyword id="KW-0812">Transmembrane</keyword>
<keyword id="KW-1133">Transmembrane helix</keyword>
<keyword id="KW-0813">Transport</keyword>
<evidence type="ECO:0000255" key="1">
    <source>
        <dbReference type="HAMAP-Rule" id="MF_01393"/>
    </source>
</evidence>
<dbReference type="EMBL" id="AB001684">
    <property type="protein sequence ID" value="BAA57860.1"/>
    <property type="molecule type" value="Genomic_DNA"/>
</dbReference>
<dbReference type="PIR" id="T07213">
    <property type="entry name" value="T07213"/>
</dbReference>
<dbReference type="RefSeq" id="NP_045785.1">
    <property type="nucleotide sequence ID" value="NC_001865.1"/>
</dbReference>
<dbReference type="SMR" id="P56295"/>
<dbReference type="GeneID" id="809148"/>
<dbReference type="GO" id="GO:0009535">
    <property type="term" value="C:chloroplast thylakoid membrane"/>
    <property type="evidence" value="ECO:0007669"/>
    <property type="project" value="UniProtKB-SubCell"/>
</dbReference>
<dbReference type="GO" id="GO:0005886">
    <property type="term" value="C:plasma membrane"/>
    <property type="evidence" value="ECO:0007669"/>
    <property type="project" value="UniProtKB-UniRule"/>
</dbReference>
<dbReference type="GO" id="GO:0045259">
    <property type="term" value="C:proton-transporting ATP synthase complex"/>
    <property type="evidence" value="ECO:0007669"/>
    <property type="project" value="UniProtKB-KW"/>
</dbReference>
<dbReference type="GO" id="GO:0046933">
    <property type="term" value="F:proton-transporting ATP synthase activity, rotational mechanism"/>
    <property type="evidence" value="ECO:0007669"/>
    <property type="project" value="UniProtKB-UniRule"/>
</dbReference>
<dbReference type="CDD" id="cd00310">
    <property type="entry name" value="ATP-synt_Fo_a_6"/>
    <property type="match status" value="1"/>
</dbReference>
<dbReference type="FunFam" id="1.20.120.220:FF:000001">
    <property type="entry name" value="ATP synthase subunit a, chloroplastic"/>
    <property type="match status" value="1"/>
</dbReference>
<dbReference type="Gene3D" id="1.20.120.220">
    <property type="entry name" value="ATP synthase, F0 complex, subunit A"/>
    <property type="match status" value="1"/>
</dbReference>
<dbReference type="HAMAP" id="MF_01393">
    <property type="entry name" value="ATP_synth_a_bact"/>
    <property type="match status" value="1"/>
</dbReference>
<dbReference type="InterPro" id="IPR045082">
    <property type="entry name" value="ATP_syn_F0_a_bact/chloroplast"/>
</dbReference>
<dbReference type="InterPro" id="IPR000568">
    <property type="entry name" value="ATP_synth_F0_asu"/>
</dbReference>
<dbReference type="InterPro" id="IPR023011">
    <property type="entry name" value="ATP_synth_F0_asu_AS"/>
</dbReference>
<dbReference type="InterPro" id="IPR035908">
    <property type="entry name" value="F0_ATP_A_sf"/>
</dbReference>
<dbReference type="NCBIfam" id="TIGR01131">
    <property type="entry name" value="ATP_synt_6_or_A"/>
    <property type="match status" value="1"/>
</dbReference>
<dbReference type="PANTHER" id="PTHR42823">
    <property type="entry name" value="ATP SYNTHASE SUBUNIT A, CHLOROPLASTIC"/>
    <property type="match status" value="1"/>
</dbReference>
<dbReference type="PANTHER" id="PTHR42823:SF3">
    <property type="entry name" value="ATP SYNTHASE SUBUNIT A, CHLOROPLASTIC"/>
    <property type="match status" value="1"/>
</dbReference>
<dbReference type="Pfam" id="PF00119">
    <property type="entry name" value="ATP-synt_A"/>
    <property type="match status" value="1"/>
</dbReference>
<dbReference type="PRINTS" id="PR00123">
    <property type="entry name" value="ATPASEA"/>
</dbReference>
<dbReference type="SUPFAM" id="SSF81336">
    <property type="entry name" value="F1F0 ATP synthase subunit A"/>
    <property type="match status" value="1"/>
</dbReference>
<dbReference type="PROSITE" id="PS00449">
    <property type="entry name" value="ATPASE_A"/>
    <property type="match status" value="1"/>
</dbReference>
<organism>
    <name type="scientific">Chlorella vulgaris</name>
    <name type="common">Green alga</name>
    <dbReference type="NCBI Taxonomy" id="3077"/>
    <lineage>
        <taxon>Eukaryota</taxon>
        <taxon>Viridiplantae</taxon>
        <taxon>Chlorophyta</taxon>
        <taxon>core chlorophytes</taxon>
        <taxon>Trebouxiophyceae</taxon>
        <taxon>Chlorellales</taxon>
        <taxon>Chlorellaceae</taxon>
        <taxon>Chlorella clade</taxon>
        <taxon>Chlorella</taxon>
    </lineage>
</organism>